<sequence>MKTLGEFIVEKQHEFSHATGELTALLSAIKLGAKIIHRDINKAGLVDILGASGAENVQGEVQQKLDLFANEKLKAALKARDIVAGIASEEEDEIVVFEGCEHAKYVVLMDPLDGSSNIDVNVSVGTIFSIYRRVTPVGTPVTEEDFLQPGNKQVAAGYVVYGSSTMLVYTTGCGVHAFTYDPSLGVFCLCQERMRFPEKGKTYSINEGNYIKFPNGVKKYIKFCQEEDKSTNRPYTSRYIGSLVADFHRNLLKGGIYLYPSTASHPDGKLRLLYECNPMAFLAEQAGGKASDGKERILDIIPETLHQRRSFFVGNDHMVEDVERFIREFPDA</sequence>
<proteinExistence type="evidence at protein level"/>
<protein>
    <recommendedName>
        <fullName evidence="1 8">Fructose-1,6-bisphosphatase class 1</fullName>
        <shortName evidence="1 8">FBPase class 1</shortName>
        <ecNumber evidence="1 2 6">3.1.3.11</ecNumber>
    </recommendedName>
    <alternativeName>
        <fullName evidence="1 8">D-fructose-1,6-bisphosphate 1-phosphohydrolase class 1</fullName>
    </alternativeName>
</protein>
<name>F16PA_ECOLI</name>
<reference key="1">
    <citation type="journal article" date="1988" name="Nucleic Acids Res.">
        <title>Sequence of the Escherichia coli fructose-1,6-bisphosphatase gene.</title>
        <authorList>
            <person name="Hamilton W.D.O."/>
            <person name="Harrison D.A."/>
            <person name="Dyer T.A."/>
        </authorList>
    </citation>
    <scope>NUCLEOTIDE SEQUENCE [GENOMIC DNA]</scope>
</reference>
<reference key="2">
    <citation type="journal article" date="1995" name="Nucleic Acids Res.">
        <title>Analysis of the Escherichia coli genome VI: DNA sequence of the region from 92.8 through 100 minutes.</title>
        <authorList>
            <person name="Burland V.D."/>
            <person name="Plunkett G. III"/>
            <person name="Sofia H.J."/>
            <person name="Daniels D.L."/>
            <person name="Blattner F.R."/>
        </authorList>
    </citation>
    <scope>NUCLEOTIDE SEQUENCE [LARGE SCALE GENOMIC DNA]</scope>
    <source>
        <strain>K12 / MG1655 / ATCC 47076</strain>
    </source>
</reference>
<reference key="3">
    <citation type="journal article" date="1997" name="Science">
        <title>The complete genome sequence of Escherichia coli K-12.</title>
        <authorList>
            <person name="Blattner F.R."/>
            <person name="Plunkett G. III"/>
            <person name="Bloch C.A."/>
            <person name="Perna N.T."/>
            <person name="Burland V."/>
            <person name="Riley M."/>
            <person name="Collado-Vides J."/>
            <person name="Glasner J.D."/>
            <person name="Rode C.K."/>
            <person name="Mayhew G.F."/>
            <person name="Gregor J."/>
            <person name="Davis N.W."/>
            <person name="Kirkpatrick H.A."/>
            <person name="Goeden M.A."/>
            <person name="Rose D.J."/>
            <person name="Mau B."/>
            <person name="Shao Y."/>
        </authorList>
    </citation>
    <scope>NUCLEOTIDE SEQUENCE [LARGE SCALE GENOMIC DNA]</scope>
    <source>
        <strain>K12 / MG1655 / ATCC 47076</strain>
    </source>
</reference>
<reference key="4">
    <citation type="journal article" date="2006" name="Mol. Syst. Biol.">
        <title>Highly accurate genome sequences of Escherichia coli K-12 strains MG1655 and W3110.</title>
        <authorList>
            <person name="Hayashi K."/>
            <person name="Morooka N."/>
            <person name="Yamamoto Y."/>
            <person name="Fujita K."/>
            <person name="Isono K."/>
            <person name="Choi S."/>
            <person name="Ohtsubo E."/>
            <person name="Baba T."/>
            <person name="Wanner B.L."/>
            <person name="Mori H."/>
            <person name="Horiuchi T."/>
        </authorList>
    </citation>
    <scope>NUCLEOTIDE SEQUENCE [LARGE SCALE GENOMIC DNA]</scope>
    <source>
        <strain>K12 / W3110 / ATCC 27325 / DSM 5911</strain>
    </source>
</reference>
<reference key="5">
    <citation type="journal article" date="1986" name="Biochem. Biophys. Res. Commun.">
        <title>Amino acid sequence homology among fructose-1,6-bisphosphatases.</title>
        <authorList>
            <person name="Marcus F."/>
            <person name="Gontero B."/>
            <person name="Harrsch P.B."/>
            <person name="Rittenhouse J."/>
        </authorList>
    </citation>
    <scope>PROTEIN SEQUENCE OF 43-62; 220-229; 239-249; 254-269 AND 297-308</scope>
</reference>
<reference key="6">
    <citation type="journal article" date="1984" name="J. Bacteriol.">
        <title>Fructose bisphosphatase of Escherichia coli: cloning of the structural gene (fbp) and preparation of a chromosomal deletion.</title>
        <authorList>
            <person name="Sedivy J.M."/>
            <person name="Daldal F."/>
            <person name="Fraenkel D.G."/>
        </authorList>
    </citation>
    <scope>CATALYTIC ACTIVITY</scope>
    <source>
        <strain>K12</strain>
    </source>
</reference>
<reference key="7">
    <citation type="journal article" date="1997" name="Electrophoresis">
        <title>Escherichia coli proteome analysis using the gene-protein database.</title>
        <authorList>
            <person name="VanBogelen R.A."/>
            <person name="Abshire K.Z."/>
            <person name="Moldover B."/>
            <person name="Olson E.R."/>
            <person name="Neidhardt F.C."/>
        </authorList>
    </citation>
    <scope>IDENTIFICATION BY 2D-GEL</scope>
</reference>
<reference evidence="12" key="8">
    <citation type="journal article" date="2006" name="J. Biol. Chem.">
        <title>Novel allosteric activation site in Escherichia coli fructose-1,6-bisphosphatase.</title>
        <authorList>
            <person name="Hines J.K."/>
            <person name="Fromm H.J."/>
            <person name="Honzatko R.B."/>
        </authorList>
    </citation>
    <scope>X-RAY CRYSTALLOGRAPHY (1.45 ANGSTROMS) IN COMPLEX WITH SULFATE IONS</scope>
    <scope>PARTIAL PROTEIN SEQUENCE</scope>
    <scope>IDENTIFICATION BY MASS SPECTROMETRY</scope>
    <scope>SUBUNIT</scope>
    <scope>COFACTOR</scope>
    <scope>CATALYTIC ACTIVITY</scope>
    <scope>BIOPHYSICOCHEMICAL PROPERTIES</scope>
    <scope>ACTIVITY REGULATION</scope>
</reference>
<reference evidence="13 14" key="9">
    <citation type="journal article" date="2007" name="J. Biol. Chem.">
        <title>Structures of activated fructose-1,6-bisphosphatase from Escherichia coli. Coordinate regulation of bacterial metabolism and the conservation of the R-state.</title>
        <authorList>
            <person name="Hines J.K."/>
            <person name="Fromm H.J."/>
            <person name="Honzatko R.B."/>
        </authorList>
    </citation>
    <scope>X-RAY CRYSTALLOGRAPHY (2.18 ANGSTROMS) IN COMPLEXES WITH FRUCTOSE-6-PHOSPHATE; CITRATE AND PHOSPHOENOLPYRUVATE</scope>
    <scope>ACTIVITY REGULATION</scope>
    <scope>SUBUNIT</scope>
</reference>
<reference evidence="15" key="10">
    <citation type="journal article" date="2007" name="J. Biol. Chem.">
        <title>Structure of inhibited fructose-1,6-bisphosphatase from Escherichia coli: distinct allosteric inhibition sites for AMP and glucose 6-phosphate and the characterization of a gluconeogenic switch.</title>
        <authorList>
            <person name="Hines J.K."/>
            <person name="Kruesel C.E."/>
            <person name="Fromm H.J."/>
            <person name="Honzatko R.B."/>
        </authorList>
    </citation>
    <scope>X-RAY CRYSTALLOGRAPHY (2.05 ANGSTROMS) IN COMPLEX WITH FRUCTOSE-1,6-BISPHOSPHATE; MAGNESIUM IONS; AMP AND BETA-D-GLUCOSE-6-PHOSPHATE</scope>
    <scope>SUBUNIT</scope>
    <scope>COFACTOR</scope>
    <scope>ACTIVITY REGULATION</scope>
</reference>
<reference evidence="16" key="11">
    <citation type="journal article" date="2007" name="J. Biol. Chem.">
        <title>Structures of mammalian and bacterial fructose-1,6-bisphosphatase reveal the basis for synergism in AMP/fructose 2,6-bisphosphate inhibition.</title>
        <authorList>
            <person name="Hines J.K."/>
            <person name="Chen X."/>
            <person name="Nix J.C."/>
            <person name="Fromm H.J."/>
            <person name="Honzatko R.B."/>
        </authorList>
    </citation>
    <scope>X-RAY CRYSTALLOGRAPHY (2.18 ANGSTROMS) IN COMPLEX WITH FRUCTOSE-2,6-BISPHOSPHATE; MAGNESIUM IONS AND CITRATE</scope>
    <scope>ACTIVITY REGULATION</scope>
</reference>
<comment type="catalytic activity">
    <reaction evidence="1 2 6">
        <text>beta-D-fructose 1,6-bisphosphate + H2O = beta-D-fructose 6-phosphate + phosphate</text>
        <dbReference type="Rhea" id="RHEA:11064"/>
        <dbReference type="ChEBI" id="CHEBI:15377"/>
        <dbReference type="ChEBI" id="CHEBI:32966"/>
        <dbReference type="ChEBI" id="CHEBI:43474"/>
        <dbReference type="ChEBI" id="CHEBI:57634"/>
        <dbReference type="EC" id="3.1.3.11"/>
    </reaction>
</comment>
<comment type="cofactor">
    <cofactor evidence="1 2 4">
        <name>Mg(2+)</name>
        <dbReference type="ChEBI" id="CHEBI:18420"/>
    </cofactor>
    <text evidence="1 2 4">Binds 2 magnesium ions per subunit.</text>
</comment>
<comment type="activity regulation">
    <text evidence="2 3 4 5">Subject to complex allosteric regulation. The enzyme can assume an active R-state, or an inactive T-state. Intermediate conformations may exist. Activated by three-carbon carboxylic acids, phosphorylated three-carbon carboxylic acids and sulfate. Strongly activated by phosphoenolpyruvate and citrate. Inhibited by AMP, which affects the turnover of bound substrate and not the affinity for substrate. Allosterically inhibited by glucose 6-phosphate. AMP and glucose 6-phosphate act synergistically as allosteric inhibitors. Phosphoenolpyruvate antagonizes inhibition by AMP and glucose 6-phosphate. Fructose 2,6-bisphosphate acts as competitive inhibitor.</text>
</comment>
<comment type="biophysicochemical properties">
    <kinetics>
        <KM evidence="2">1.7 uM for fructose 1,6-biphosphate</KM>
    </kinetics>
</comment>
<comment type="pathway">
    <text evidence="1">Carbohydrate biosynthesis; gluconeogenesis.</text>
</comment>
<comment type="subunit">
    <text evidence="2 3 4 5">Homotetramer. Phosphoenolpyruvate stabilizes the homotetramer.</text>
</comment>
<comment type="subcellular location">
    <subcellularLocation>
        <location evidence="1 8">Cytoplasm</location>
    </subcellularLocation>
</comment>
<comment type="similarity">
    <text evidence="1 8">Belongs to the FBPase class 1 family.</text>
</comment>
<keyword id="KW-0002">3D-structure</keyword>
<keyword id="KW-0021">Allosteric enzyme</keyword>
<keyword id="KW-0119">Carbohydrate metabolism</keyword>
<keyword id="KW-0963">Cytoplasm</keyword>
<keyword id="KW-0903">Direct protein sequencing</keyword>
<keyword id="KW-0378">Hydrolase</keyword>
<keyword id="KW-0460">Magnesium</keyword>
<keyword id="KW-0479">Metal-binding</keyword>
<keyword id="KW-0547">Nucleotide-binding</keyword>
<keyword id="KW-1185">Reference proteome</keyword>
<evidence type="ECO:0000255" key="1">
    <source>
        <dbReference type="HAMAP-Rule" id="MF_01855"/>
    </source>
</evidence>
<evidence type="ECO:0000269" key="2">
    <source>
    </source>
</evidence>
<evidence type="ECO:0000269" key="3">
    <source>
    </source>
</evidence>
<evidence type="ECO:0000269" key="4">
    <source>
    </source>
</evidence>
<evidence type="ECO:0000269" key="5">
    <source>
    </source>
</evidence>
<evidence type="ECO:0000269" key="6">
    <source>
    </source>
</evidence>
<evidence type="ECO:0000303" key="7">
    <source>
    </source>
</evidence>
<evidence type="ECO:0000305" key="8"/>
<evidence type="ECO:0000305" key="9">
    <source>
    </source>
</evidence>
<evidence type="ECO:0000305" key="10">
    <source>
    </source>
</evidence>
<evidence type="ECO:0000305" key="11">
    <source>
    </source>
</evidence>
<evidence type="ECO:0007744" key="12">
    <source>
        <dbReference type="PDB" id="2GQ1"/>
    </source>
</evidence>
<evidence type="ECO:0007744" key="13">
    <source>
        <dbReference type="PDB" id="2OWZ"/>
    </source>
</evidence>
<evidence type="ECO:0007744" key="14">
    <source>
        <dbReference type="PDB" id="2OX3"/>
    </source>
</evidence>
<evidence type="ECO:0007744" key="15">
    <source>
        <dbReference type="PDB" id="2Q8M"/>
    </source>
</evidence>
<evidence type="ECO:0007744" key="16">
    <source>
        <dbReference type="PDB" id="2QVR"/>
    </source>
</evidence>
<evidence type="ECO:0007829" key="17">
    <source>
        <dbReference type="PDB" id="2GQ1"/>
    </source>
</evidence>
<evidence type="ECO:0007829" key="18">
    <source>
        <dbReference type="PDB" id="2QVR"/>
    </source>
</evidence>
<organism>
    <name type="scientific">Escherichia coli (strain K12)</name>
    <dbReference type="NCBI Taxonomy" id="83333"/>
    <lineage>
        <taxon>Bacteria</taxon>
        <taxon>Pseudomonadati</taxon>
        <taxon>Pseudomonadota</taxon>
        <taxon>Gammaproteobacteria</taxon>
        <taxon>Enterobacterales</taxon>
        <taxon>Enterobacteriaceae</taxon>
        <taxon>Escherichia</taxon>
    </lineage>
</organism>
<feature type="chain" id="PRO_0000200492" description="Fructose-1,6-bisphosphatase class 1">
    <location>
        <begin position="1"/>
        <end position="332"/>
    </location>
</feature>
<feature type="binding site" evidence="9 11 13 16">
    <location>
        <begin position="3"/>
        <end position="5"/>
    </location>
    <ligand>
        <name>citrate</name>
        <dbReference type="ChEBI" id="CHEBI:16947"/>
        <note>allosteric activator</note>
    </ligand>
</feature>
<feature type="binding site" evidence="9 14">
    <location>
        <begin position="3"/>
        <end position="5"/>
    </location>
    <ligand>
        <name>phosphoenolpyruvate</name>
        <dbReference type="ChEBI" id="CHEBI:58702"/>
        <note>allosteric activator</note>
    </ligand>
</feature>
<feature type="binding site" evidence="4 15">
    <location>
        <begin position="19"/>
        <end position="23"/>
    </location>
    <ligand>
        <name>AMP</name>
        <dbReference type="ChEBI" id="CHEBI:456215"/>
    </ligand>
</feature>
<feature type="binding site" evidence="9 11 13 16">
    <location>
        <position position="30"/>
    </location>
    <ligand>
        <name>citrate</name>
        <dbReference type="ChEBI" id="CHEBI:16947"/>
        <note>allosteric activator</note>
    </ligand>
</feature>
<feature type="binding site" evidence="9 14">
    <location>
        <position position="30"/>
    </location>
    <ligand>
        <name>phosphoenolpyruvate</name>
        <dbReference type="ChEBI" id="CHEBI:58702"/>
        <note>allosteric activator</note>
    </ligand>
</feature>
<feature type="binding site" evidence="1 4">
    <location>
        <position position="89"/>
    </location>
    <ligand>
        <name>Mg(2+)</name>
        <dbReference type="ChEBI" id="CHEBI:18420"/>
        <label>1</label>
    </ligand>
</feature>
<feature type="binding site" evidence="4 15">
    <location>
        <begin position="104"/>
        <end position="105"/>
    </location>
    <ligand>
        <name>AMP</name>
        <dbReference type="ChEBI" id="CHEBI:456215"/>
    </ligand>
</feature>
<feature type="binding site" evidence="1 4">
    <location>
        <position position="110"/>
    </location>
    <ligand>
        <name>Mg(2+)</name>
        <dbReference type="ChEBI" id="CHEBI:18420"/>
        <label>1</label>
    </ligand>
</feature>
<feature type="binding site" evidence="1 4 5">
    <location>
        <position position="110"/>
    </location>
    <ligand>
        <name>Mg(2+)</name>
        <dbReference type="ChEBI" id="CHEBI:18420"/>
        <label>2</label>
    </ligand>
</feature>
<feature type="binding site" evidence="1 4">
    <location>
        <position position="112"/>
    </location>
    <ligand>
        <name>Mg(2+)</name>
        <dbReference type="ChEBI" id="CHEBI:18420"/>
        <label>1</label>
    </ligand>
</feature>
<feature type="binding site" evidence="1 9 10">
    <location>
        <begin position="113"/>
        <end position="116"/>
    </location>
    <ligand>
        <name>substrate</name>
    </ligand>
</feature>
<feature type="binding site" evidence="1 4 5">
    <location>
        <position position="113"/>
    </location>
    <ligand>
        <name>Mg(2+)</name>
        <dbReference type="ChEBI" id="CHEBI:18420"/>
        <label>2</label>
    </ligand>
</feature>
<feature type="binding site" evidence="9 11 13 16">
    <location>
        <position position="187"/>
    </location>
    <ligand>
        <name>citrate</name>
        <dbReference type="ChEBI" id="CHEBI:16947"/>
        <note>allosteric activator</note>
    </ligand>
</feature>
<feature type="binding site" evidence="1 9 10">
    <location>
        <position position="206"/>
    </location>
    <ligand>
        <name>substrate</name>
    </ligand>
</feature>
<feature type="binding site" evidence="10 15">
    <location>
        <position position="222"/>
    </location>
    <ligand>
        <name>beta-D-glucose 6-phosphate</name>
        <dbReference type="ChEBI" id="CHEBI:58247"/>
        <note>allosteric inhibitor</note>
    </ligand>
</feature>
<feature type="binding site" evidence="10 15">
    <location>
        <position position="225"/>
    </location>
    <ligand>
        <name>beta-D-glucose 6-phosphate</name>
        <dbReference type="ChEBI" id="CHEBI:58247"/>
        <note>allosteric inhibitor</note>
    </ligand>
</feature>
<feature type="binding site" evidence="1 9 10">
    <location>
        <position position="239"/>
    </location>
    <ligand>
        <name>substrate</name>
    </ligand>
</feature>
<feature type="binding site" evidence="1 9 10">
    <location>
        <begin position="257"/>
        <end position="259"/>
    </location>
    <ligand>
        <name>substrate</name>
    </ligand>
</feature>
<feature type="binding site" evidence="1 9 10">
    <location>
        <position position="269"/>
    </location>
    <ligand>
        <name>substrate</name>
    </ligand>
</feature>
<feature type="binding site" evidence="1 4 5">
    <location>
        <position position="275"/>
    </location>
    <ligand>
        <name>Mg(2+)</name>
        <dbReference type="ChEBI" id="CHEBI:18420"/>
        <label>2</label>
    </ligand>
</feature>
<feature type="helix" evidence="17">
    <location>
        <begin position="4"/>
        <end position="10"/>
    </location>
</feature>
<feature type="turn" evidence="17">
    <location>
        <begin position="11"/>
        <end position="14"/>
    </location>
</feature>
<feature type="helix" evidence="17">
    <location>
        <begin position="15"/>
        <end position="17"/>
    </location>
</feature>
<feature type="helix" evidence="17">
    <location>
        <begin position="19"/>
        <end position="40"/>
    </location>
</feature>
<feature type="turn" evidence="18">
    <location>
        <begin position="41"/>
        <end position="48"/>
    </location>
</feature>
<feature type="strand" evidence="18">
    <location>
        <begin position="50"/>
        <end position="55"/>
    </location>
</feature>
<feature type="strand" evidence="18">
    <location>
        <begin position="61"/>
        <end position="63"/>
    </location>
</feature>
<feature type="helix" evidence="17">
    <location>
        <begin position="65"/>
        <end position="79"/>
    </location>
</feature>
<feature type="strand" evidence="17">
    <location>
        <begin position="83"/>
        <end position="88"/>
    </location>
</feature>
<feature type="strand" evidence="17">
    <location>
        <begin position="105"/>
        <end position="113"/>
    </location>
</feature>
<feature type="helix" evidence="17">
    <location>
        <begin position="115"/>
        <end position="120"/>
    </location>
</feature>
<feature type="strand" evidence="17">
    <location>
        <begin position="124"/>
        <end position="132"/>
    </location>
</feature>
<feature type="helix" evidence="17">
    <location>
        <begin position="143"/>
        <end position="146"/>
    </location>
</feature>
<feature type="helix" evidence="17">
    <location>
        <begin position="150"/>
        <end position="152"/>
    </location>
</feature>
<feature type="strand" evidence="17">
    <location>
        <begin position="154"/>
        <end position="173"/>
    </location>
</feature>
<feature type="strand" evidence="17">
    <location>
        <begin position="175"/>
        <end position="180"/>
    </location>
</feature>
<feature type="turn" evidence="17">
    <location>
        <begin position="182"/>
        <end position="184"/>
    </location>
</feature>
<feature type="strand" evidence="17">
    <location>
        <begin position="186"/>
        <end position="194"/>
    </location>
</feature>
<feature type="strand" evidence="17">
    <location>
        <begin position="202"/>
        <end position="204"/>
    </location>
</feature>
<feature type="helix" evidence="17">
    <location>
        <begin position="207"/>
        <end position="212"/>
    </location>
</feature>
<feature type="helix" evidence="17">
    <location>
        <begin position="215"/>
        <end position="224"/>
    </location>
</feature>
<feature type="helix" evidence="17">
    <location>
        <begin position="229"/>
        <end position="231"/>
    </location>
</feature>
<feature type="helix" evidence="17">
    <location>
        <begin position="243"/>
        <end position="253"/>
    </location>
</feature>
<feature type="strand" evidence="17">
    <location>
        <begin position="256"/>
        <end position="259"/>
    </location>
</feature>
<feature type="strand" evidence="17">
    <location>
        <begin position="263"/>
        <end position="265"/>
    </location>
</feature>
<feature type="strand" evidence="17">
    <location>
        <begin position="269"/>
        <end position="271"/>
    </location>
</feature>
<feature type="turn" evidence="17">
    <location>
        <begin position="272"/>
        <end position="275"/>
    </location>
</feature>
<feature type="helix" evidence="17">
    <location>
        <begin position="276"/>
        <end position="285"/>
    </location>
</feature>
<feature type="strand" evidence="17">
    <location>
        <begin position="289"/>
        <end position="296"/>
    </location>
</feature>
<feature type="helix" evidence="17">
    <location>
        <begin position="297"/>
        <end position="299"/>
    </location>
</feature>
<feature type="strand" evidence="17">
    <location>
        <begin position="311"/>
        <end position="315"/>
    </location>
</feature>
<feature type="helix" evidence="17">
    <location>
        <begin position="316"/>
        <end position="328"/>
    </location>
</feature>
<accession>P0A993</accession>
<accession>P09200</accession>
<accession>Q2M674</accession>
<dbReference type="EC" id="3.1.3.11" evidence="1 2 6"/>
<dbReference type="EMBL" id="X12545">
    <property type="protein sequence ID" value="CAA31062.1"/>
    <property type="molecule type" value="mRNA"/>
</dbReference>
<dbReference type="EMBL" id="U14003">
    <property type="protein sequence ID" value="AAA97129.1"/>
    <property type="molecule type" value="Genomic_DNA"/>
</dbReference>
<dbReference type="EMBL" id="U00096">
    <property type="protein sequence ID" value="AAC77189.1"/>
    <property type="molecule type" value="Genomic_DNA"/>
</dbReference>
<dbReference type="EMBL" id="AP009048">
    <property type="protein sequence ID" value="BAE78232.1"/>
    <property type="molecule type" value="Genomic_DNA"/>
</dbReference>
<dbReference type="PIR" id="S01383">
    <property type="entry name" value="PAEC"/>
</dbReference>
<dbReference type="RefSeq" id="NP_418653.1">
    <property type="nucleotide sequence ID" value="NC_000913.3"/>
</dbReference>
<dbReference type="RefSeq" id="WP_000853753.1">
    <property type="nucleotide sequence ID" value="NZ_STEB01000013.1"/>
</dbReference>
<dbReference type="PDB" id="2GQ1">
    <property type="method" value="X-ray"/>
    <property type="resolution" value="1.45 A"/>
    <property type="chains" value="A=1-332"/>
</dbReference>
<dbReference type="PDB" id="2OWZ">
    <property type="method" value="X-ray"/>
    <property type="resolution" value="2.18 A"/>
    <property type="chains" value="A=1-332"/>
</dbReference>
<dbReference type="PDB" id="2OX3">
    <property type="method" value="X-ray"/>
    <property type="resolution" value="2.18 A"/>
    <property type="chains" value="A=1-332"/>
</dbReference>
<dbReference type="PDB" id="2Q8M">
    <property type="method" value="X-ray"/>
    <property type="resolution" value="2.05 A"/>
    <property type="chains" value="A/B=1-332"/>
</dbReference>
<dbReference type="PDB" id="2QVR">
    <property type="method" value="X-ray"/>
    <property type="resolution" value="2.18 A"/>
    <property type="chains" value="A=1-332"/>
</dbReference>
<dbReference type="PDBsum" id="2GQ1"/>
<dbReference type="PDBsum" id="2OWZ"/>
<dbReference type="PDBsum" id="2OX3"/>
<dbReference type="PDBsum" id="2Q8M"/>
<dbReference type="PDBsum" id="2QVR"/>
<dbReference type="SMR" id="P0A993"/>
<dbReference type="BioGRID" id="4259316">
    <property type="interactions" value="21"/>
</dbReference>
<dbReference type="FunCoup" id="P0A993">
    <property type="interactions" value="711"/>
</dbReference>
<dbReference type="STRING" id="511145.b4232"/>
<dbReference type="jPOST" id="P0A993"/>
<dbReference type="PaxDb" id="511145-b4232"/>
<dbReference type="EnsemblBacteria" id="AAC77189">
    <property type="protein sequence ID" value="AAC77189"/>
    <property type="gene ID" value="b4232"/>
</dbReference>
<dbReference type="GeneID" id="86861371"/>
<dbReference type="GeneID" id="948753"/>
<dbReference type="KEGG" id="ecj:JW4191"/>
<dbReference type="KEGG" id="eco:b4232"/>
<dbReference type="KEGG" id="ecoc:C3026_22845"/>
<dbReference type="PATRIC" id="fig|1411691.4.peg.2470"/>
<dbReference type="EchoBASE" id="EB0279"/>
<dbReference type="eggNOG" id="COG0158">
    <property type="taxonomic scope" value="Bacteria"/>
</dbReference>
<dbReference type="HOGENOM" id="CLU_039977_2_2_6"/>
<dbReference type="InParanoid" id="P0A993"/>
<dbReference type="OMA" id="YIPENCP"/>
<dbReference type="OrthoDB" id="9806756at2"/>
<dbReference type="PhylomeDB" id="P0A993"/>
<dbReference type="BioCyc" id="EcoCyc:F16B-MONOMER"/>
<dbReference type="BioCyc" id="MetaCyc:F16B-MONOMER"/>
<dbReference type="BRENDA" id="3.1.3.11">
    <property type="organism ID" value="2026"/>
</dbReference>
<dbReference type="SABIO-RK" id="P0A993"/>
<dbReference type="UniPathway" id="UPA00138"/>
<dbReference type="EvolutionaryTrace" id="P0A993"/>
<dbReference type="PRO" id="PR:P0A993"/>
<dbReference type="Proteomes" id="UP000000625">
    <property type="component" value="Chromosome"/>
</dbReference>
<dbReference type="GO" id="GO:0005737">
    <property type="term" value="C:cytoplasm"/>
    <property type="evidence" value="ECO:0000318"/>
    <property type="project" value="GO_Central"/>
</dbReference>
<dbReference type="GO" id="GO:0005829">
    <property type="term" value="C:cytosol"/>
    <property type="evidence" value="ECO:0000314"/>
    <property type="project" value="EcoCyc"/>
</dbReference>
<dbReference type="GO" id="GO:0032991">
    <property type="term" value="C:protein-containing complex"/>
    <property type="evidence" value="ECO:0000353"/>
    <property type="project" value="EcoCyc"/>
</dbReference>
<dbReference type="GO" id="GO:0042132">
    <property type="term" value="F:fructose 1,6-bisphosphate 1-phosphatase activity"/>
    <property type="evidence" value="ECO:0000314"/>
    <property type="project" value="EcoCyc"/>
</dbReference>
<dbReference type="GO" id="GO:0042802">
    <property type="term" value="F:identical protein binding"/>
    <property type="evidence" value="ECO:0000314"/>
    <property type="project" value="EcoCyc"/>
</dbReference>
<dbReference type="GO" id="GO:0000287">
    <property type="term" value="F:magnesium ion binding"/>
    <property type="evidence" value="ECO:0007669"/>
    <property type="project" value="UniProtKB-UniRule"/>
</dbReference>
<dbReference type="GO" id="GO:0000166">
    <property type="term" value="F:nucleotide binding"/>
    <property type="evidence" value="ECO:0007669"/>
    <property type="project" value="UniProtKB-KW"/>
</dbReference>
<dbReference type="GO" id="GO:0030388">
    <property type="term" value="P:fructose 1,6-bisphosphate metabolic process"/>
    <property type="evidence" value="ECO:0000318"/>
    <property type="project" value="GO_Central"/>
</dbReference>
<dbReference type="GO" id="GO:0006002">
    <property type="term" value="P:fructose 6-phosphate metabolic process"/>
    <property type="evidence" value="ECO:0000318"/>
    <property type="project" value="GO_Central"/>
</dbReference>
<dbReference type="GO" id="GO:0006000">
    <property type="term" value="P:fructose metabolic process"/>
    <property type="evidence" value="ECO:0000318"/>
    <property type="project" value="GO_Central"/>
</dbReference>
<dbReference type="GO" id="GO:0006094">
    <property type="term" value="P:gluconeogenesis"/>
    <property type="evidence" value="ECO:0000315"/>
    <property type="project" value="EcoCyc"/>
</dbReference>
<dbReference type="CDD" id="cd00354">
    <property type="entry name" value="FBPase"/>
    <property type="match status" value="1"/>
</dbReference>
<dbReference type="FunFam" id="3.30.540.10:FF:000002">
    <property type="entry name" value="Fructose-1,6-bisphosphatase class 1"/>
    <property type="match status" value="1"/>
</dbReference>
<dbReference type="FunFam" id="3.40.190.80:FF:000001">
    <property type="entry name" value="Fructose-1,6-bisphosphatase class 1"/>
    <property type="match status" value="1"/>
</dbReference>
<dbReference type="Gene3D" id="3.40.190.80">
    <property type="match status" value="1"/>
</dbReference>
<dbReference type="Gene3D" id="3.30.540.10">
    <property type="entry name" value="Fructose-1,6-Bisphosphatase, subunit A, domain 1"/>
    <property type="match status" value="1"/>
</dbReference>
<dbReference type="HAMAP" id="MF_01855">
    <property type="entry name" value="FBPase_class1"/>
    <property type="match status" value="1"/>
</dbReference>
<dbReference type="InterPro" id="IPR044015">
    <property type="entry name" value="FBPase_C_dom"/>
</dbReference>
<dbReference type="InterPro" id="IPR000146">
    <property type="entry name" value="FBPase_class-1"/>
</dbReference>
<dbReference type="InterPro" id="IPR033391">
    <property type="entry name" value="FBPase_N"/>
</dbReference>
<dbReference type="InterPro" id="IPR028343">
    <property type="entry name" value="FBPtase"/>
</dbReference>
<dbReference type="InterPro" id="IPR020548">
    <property type="entry name" value="Fructose_bisphosphatase_AS"/>
</dbReference>
<dbReference type="NCBIfam" id="NF006778">
    <property type="entry name" value="PRK09293.1-1"/>
    <property type="match status" value="1"/>
</dbReference>
<dbReference type="NCBIfam" id="NF006779">
    <property type="entry name" value="PRK09293.1-3"/>
    <property type="match status" value="1"/>
</dbReference>
<dbReference type="PANTHER" id="PTHR11556">
    <property type="entry name" value="FRUCTOSE-1,6-BISPHOSPHATASE-RELATED"/>
    <property type="match status" value="1"/>
</dbReference>
<dbReference type="PANTHER" id="PTHR11556:SF35">
    <property type="entry name" value="SEDOHEPTULOSE-1,7-BISPHOSPHATASE, CHLOROPLASTIC"/>
    <property type="match status" value="1"/>
</dbReference>
<dbReference type="Pfam" id="PF00316">
    <property type="entry name" value="FBPase"/>
    <property type="match status" value="1"/>
</dbReference>
<dbReference type="Pfam" id="PF18913">
    <property type="entry name" value="FBPase_C"/>
    <property type="match status" value="1"/>
</dbReference>
<dbReference type="PIRSF" id="PIRSF500210">
    <property type="entry name" value="FBPtase"/>
    <property type="match status" value="1"/>
</dbReference>
<dbReference type="PIRSF" id="PIRSF000904">
    <property type="entry name" value="FBPtase_SBPase"/>
    <property type="match status" value="1"/>
</dbReference>
<dbReference type="PRINTS" id="PR00115">
    <property type="entry name" value="F16BPHPHTASE"/>
</dbReference>
<dbReference type="SUPFAM" id="SSF56655">
    <property type="entry name" value="Carbohydrate phosphatase"/>
    <property type="match status" value="1"/>
</dbReference>
<dbReference type="PROSITE" id="PS00124">
    <property type="entry name" value="FBPASE"/>
    <property type="match status" value="1"/>
</dbReference>
<gene>
    <name evidence="7" type="primary">fbp</name>
    <name type="synonym">fdp</name>
    <name type="ordered locus">b4232</name>
    <name type="ordered locus">JW4191</name>
</gene>